<proteinExistence type="evidence at transcript level"/>
<accession>Q6P719</accession>
<gene>
    <name evidence="1" type="primary">Mmgt2</name>
</gene>
<dbReference type="EMBL" id="BC061881">
    <property type="protein sequence ID" value="AAH61881.1"/>
    <property type="molecule type" value="mRNA"/>
</dbReference>
<dbReference type="RefSeq" id="NP_001013989.1">
    <property type="nucleotide sequence ID" value="NM_001013967.1"/>
</dbReference>
<dbReference type="SMR" id="Q6P719"/>
<dbReference type="FunCoup" id="Q6P719">
    <property type="interactions" value="143"/>
</dbReference>
<dbReference type="PhosphoSitePlus" id="Q6P719"/>
<dbReference type="GeneID" id="303211"/>
<dbReference type="KEGG" id="rno:303211"/>
<dbReference type="UCSC" id="RGD:1311260">
    <property type="organism name" value="rat"/>
</dbReference>
<dbReference type="AGR" id="RGD:1311260"/>
<dbReference type="CTD" id="216829"/>
<dbReference type="RGD" id="1311260">
    <property type="gene designation" value="Mmgt2"/>
</dbReference>
<dbReference type="InParanoid" id="Q6P719"/>
<dbReference type="OrthoDB" id="44756at2759"/>
<dbReference type="PhylomeDB" id="Q6P719"/>
<dbReference type="PRO" id="PR:Q6P719"/>
<dbReference type="Proteomes" id="UP000002494">
    <property type="component" value="Unplaced"/>
</dbReference>
<dbReference type="GO" id="GO:0005769">
    <property type="term" value="C:early endosome"/>
    <property type="evidence" value="ECO:0000250"/>
    <property type="project" value="UniProtKB"/>
</dbReference>
<dbReference type="GO" id="GO:0031901">
    <property type="term" value="C:early endosome membrane"/>
    <property type="evidence" value="ECO:0007669"/>
    <property type="project" value="UniProtKB-SubCell"/>
</dbReference>
<dbReference type="GO" id="GO:0072546">
    <property type="term" value="C:EMC complex"/>
    <property type="evidence" value="ECO:0000318"/>
    <property type="project" value="GO_Central"/>
</dbReference>
<dbReference type="GO" id="GO:0005794">
    <property type="term" value="C:Golgi apparatus"/>
    <property type="evidence" value="ECO:0000250"/>
    <property type="project" value="UniProtKB"/>
</dbReference>
<dbReference type="GO" id="GO:0000139">
    <property type="term" value="C:Golgi membrane"/>
    <property type="evidence" value="ECO:0007669"/>
    <property type="project" value="UniProtKB-SubCell"/>
</dbReference>
<dbReference type="GO" id="GO:0005886">
    <property type="term" value="C:plasma membrane"/>
    <property type="evidence" value="ECO:0000318"/>
    <property type="project" value="GO_Central"/>
</dbReference>
<dbReference type="GO" id="GO:0022890">
    <property type="term" value="F:inorganic cation transmembrane transporter activity"/>
    <property type="evidence" value="ECO:0000318"/>
    <property type="project" value="GO_Central"/>
</dbReference>
<dbReference type="GO" id="GO:0015095">
    <property type="term" value="F:magnesium ion transmembrane transporter activity"/>
    <property type="evidence" value="ECO:0000250"/>
    <property type="project" value="UniProtKB"/>
</dbReference>
<dbReference type="GO" id="GO:0015693">
    <property type="term" value="P:magnesium ion transport"/>
    <property type="evidence" value="ECO:0000250"/>
    <property type="project" value="UniProtKB"/>
</dbReference>
<dbReference type="InterPro" id="IPR018937">
    <property type="entry name" value="MMgT"/>
</dbReference>
<dbReference type="PANTHER" id="PTHR21181">
    <property type="match status" value="1"/>
</dbReference>
<dbReference type="PANTHER" id="PTHR21181:SF14">
    <property type="entry name" value="MEMBRANE MAGNESIUM TRANSPORTER 2"/>
    <property type="match status" value="1"/>
</dbReference>
<dbReference type="Pfam" id="PF10270">
    <property type="entry name" value="MMgT"/>
    <property type="match status" value="1"/>
</dbReference>
<organism>
    <name type="scientific">Rattus norvegicus</name>
    <name type="common">Rat</name>
    <dbReference type="NCBI Taxonomy" id="10116"/>
    <lineage>
        <taxon>Eukaryota</taxon>
        <taxon>Metazoa</taxon>
        <taxon>Chordata</taxon>
        <taxon>Craniata</taxon>
        <taxon>Vertebrata</taxon>
        <taxon>Euteleostomi</taxon>
        <taxon>Mammalia</taxon>
        <taxon>Eutheria</taxon>
        <taxon>Euarchontoglires</taxon>
        <taxon>Glires</taxon>
        <taxon>Rodentia</taxon>
        <taxon>Myomorpha</taxon>
        <taxon>Muroidea</taxon>
        <taxon>Muridae</taxon>
        <taxon>Murinae</taxon>
        <taxon>Rattus</taxon>
    </lineage>
</organism>
<comment type="function">
    <text evidence="1">Mediates Mg(2+) transport.</text>
</comment>
<comment type="subcellular location">
    <subcellularLocation>
        <location evidence="1">Golgi apparatus membrane</location>
        <topology evidence="2">Multi-pass membrane protein</topology>
    </subcellularLocation>
    <subcellularLocation>
        <location evidence="1">Early endosome membrane</location>
        <topology evidence="2">Multi-pass membrane protein</topology>
    </subcellularLocation>
</comment>
<comment type="similarity">
    <text evidence="3">Belongs to the membrane magnesium transporter (TC 1.A.67) family.</text>
</comment>
<evidence type="ECO:0000250" key="1">
    <source>
        <dbReference type="UniProtKB" id="Q8R3L0"/>
    </source>
</evidence>
<evidence type="ECO:0000255" key="2"/>
<evidence type="ECO:0000305" key="3"/>
<evidence type="ECO:0000312" key="4">
    <source>
        <dbReference type="EMBL" id="AAH61881.1"/>
    </source>
</evidence>
<feature type="chain" id="PRO_0000365626" description="Membrane magnesium transporter 2" evidence="2">
    <location>
        <begin position="1"/>
        <end position="124"/>
    </location>
</feature>
<feature type="topological domain" description="Cytoplasmic" evidence="3">
    <location>
        <position position="1"/>
    </location>
</feature>
<feature type="transmembrane region" description="Helical" evidence="2">
    <location>
        <begin position="2"/>
        <end position="22"/>
    </location>
</feature>
<feature type="topological domain" description="Lumenal" evidence="3">
    <location>
        <begin position="23"/>
        <end position="44"/>
    </location>
</feature>
<feature type="transmembrane region" description="Helical" evidence="2">
    <location>
        <begin position="45"/>
        <end position="65"/>
    </location>
</feature>
<feature type="topological domain" description="Cytoplasmic" evidence="3">
    <location>
        <begin position="66"/>
        <end position="124"/>
    </location>
</feature>
<keyword id="KW-0967">Endosome</keyword>
<keyword id="KW-0333">Golgi apparatus</keyword>
<keyword id="KW-0460">Magnesium</keyword>
<keyword id="KW-0472">Membrane</keyword>
<keyword id="KW-1185">Reference proteome</keyword>
<keyword id="KW-0812">Transmembrane</keyword>
<keyword id="KW-1133">Transmembrane helix</keyword>
<keyword id="KW-0813">Transport</keyword>
<name>MMGT2_RAT</name>
<reference evidence="4" key="1">
    <citation type="journal article" date="2004" name="Genome Res.">
        <title>The status, quality, and expansion of the NIH full-length cDNA project: the Mammalian Gene Collection (MGC).</title>
        <authorList>
            <consortium name="The MGC Project Team"/>
        </authorList>
    </citation>
    <scope>NUCLEOTIDE SEQUENCE [LARGE SCALE MRNA]</scope>
    <source>
        <tissue evidence="4">Prostate</tissue>
    </source>
</reference>
<protein>
    <recommendedName>
        <fullName evidence="1">Membrane magnesium transporter 2</fullName>
    </recommendedName>
</protein>
<sequence length="124" mass="13796">MVAWLWKVLVGVGLSALAHAAFSAAQHRSHTRLAEMKYEPLPTDIVLQTLLAFALTCYGVVHTAGDFRDRDATSELKNVTFDTLRNRPSFYVFQHSGSSLLQPSDTTRSSNLNVPSSDDIRLKF</sequence>